<sequence>MITPIIMAGGNGSRLWPLSRTLYPKQFLCLDGSQSMLQTTITRINNLNASDPIVICNEQHRFIVAEQLKELSKSSGDIILEPVGRNTAPAVALAALKCLKKNALLLVLAADHIIKDEETFCKTIQDARKYAEAGKLVTFGIVPTMPETGYGYIRRGQALFSAENDCSLAFRVAEFVEKPNLETAQSYLDSGEYYWNSGMFLFRADRYIEELKIRPDIYKACSLAMESAVTDLDFIRVDEDSFCACPDESIDYAVMEKTNDAVVVPLNAGWSDVGSWSSLWEISDKDSNGNVTKGDVLSHNADNCYLHAETGLVTAVGVKDLIVVQTKDAVLVANTNCVQDVKKIVEKIKLENRHEHITHREVYRPWGKYDSIDFGERYQVKRITVKPGEGISEQQHYHRAEHWIIVAGTAKITIKGEVKILTENESVYIPVGVKHCLENPGKIALELIEVRSGAYLGEDDIVRFSDKYGRN</sequence>
<keyword id="KW-0342">GTP-binding</keyword>
<keyword id="KW-0448">Lipopolysaccharide biosynthesis</keyword>
<keyword id="KW-0547">Nucleotide-binding</keyword>
<keyword id="KW-0548">Nucleotidyltransferase</keyword>
<keyword id="KW-0808">Transferase</keyword>
<name>MANC_SALMO</name>
<proteinExistence type="inferred from homology"/>
<reference key="1">
    <citation type="journal article" date="1992" name="J. Gen. Microbiol.">
        <title>Sequence and structural analysis of the rfb (O antigen) gene cluster from a group C1 Salmonella enterica strain.</title>
        <authorList>
            <person name="Lee S.J."/>
            <person name="Romana L.K."/>
            <person name="Reeves P.R."/>
        </authorList>
    </citation>
    <scope>NUCLEOTIDE SEQUENCE [GENOMIC DNA]</scope>
    <source>
        <strain>M40</strain>
    </source>
</reference>
<organism>
    <name type="scientific">Salmonella montevideo</name>
    <dbReference type="NCBI Taxonomy" id="115981"/>
    <lineage>
        <taxon>Bacteria</taxon>
        <taxon>Pseudomonadati</taxon>
        <taxon>Pseudomonadota</taxon>
        <taxon>Gammaproteobacteria</taxon>
        <taxon>Enterobacterales</taxon>
        <taxon>Enterobacteriaceae</taxon>
        <taxon>Salmonella</taxon>
    </lineage>
</organism>
<gene>
    <name type="primary">manC</name>
    <name type="synonym">rfbM</name>
</gene>
<feature type="chain" id="PRO_0000194256" description="Mannose-1-phosphate guanylyltransferase">
    <location>
        <begin position="1"/>
        <end position="471"/>
    </location>
</feature>
<evidence type="ECO:0000305" key="1"/>
<comment type="function">
    <text>Involved in GDP-mannose biosynthesis which serves as the activated sugar nucleotide precursor for mannose residues in cell surface polysaccharides. This enzyme participates in synthesis of the LPS O antigen.</text>
</comment>
<comment type="catalytic activity">
    <reaction>
        <text>alpha-D-mannose 1-phosphate + GTP + H(+) = GDP-alpha-D-mannose + diphosphate</text>
        <dbReference type="Rhea" id="RHEA:15229"/>
        <dbReference type="ChEBI" id="CHEBI:15378"/>
        <dbReference type="ChEBI" id="CHEBI:33019"/>
        <dbReference type="ChEBI" id="CHEBI:37565"/>
        <dbReference type="ChEBI" id="CHEBI:57527"/>
        <dbReference type="ChEBI" id="CHEBI:58409"/>
        <dbReference type="EC" id="2.7.7.13"/>
    </reaction>
</comment>
<comment type="pathway">
    <text>Nucleotide-sugar biosynthesis; GDP-alpha-D-mannose biosynthesis; GDP-alpha-D-mannose from alpha-D-mannose 1-phosphate (GTP route): step 1/1.</text>
</comment>
<comment type="similarity">
    <text evidence="1">Belongs to the mannose-6-phosphate isomerase type 2 family.</text>
</comment>
<accession>Q01410</accession>
<protein>
    <recommendedName>
        <fullName>Mannose-1-phosphate guanylyltransferase</fullName>
        <ecNumber>2.7.7.13</ecNumber>
    </recommendedName>
    <alternativeName>
        <fullName>GDP-mannose pyrophosphorylase</fullName>
        <shortName>GMP</shortName>
        <shortName>GMPP</shortName>
    </alternativeName>
</protein>
<dbReference type="EC" id="2.7.7.13"/>
<dbReference type="EMBL" id="M84642">
    <property type="protein sequence ID" value="AAB49390.1"/>
    <property type="molecule type" value="Genomic_DNA"/>
</dbReference>
<dbReference type="PIR" id="S27676">
    <property type="entry name" value="S27676"/>
</dbReference>
<dbReference type="SMR" id="Q01410"/>
<dbReference type="UniPathway" id="UPA00126">
    <property type="reaction ID" value="UER00930"/>
</dbReference>
<dbReference type="GO" id="GO:0005525">
    <property type="term" value="F:GTP binding"/>
    <property type="evidence" value="ECO:0007669"/>
    <property type="project" value="UniProtKB-KW"/>
</dbReference>
<dbReference type="GO" id="GO:0004475">
    <property type="term" value="F:mannose-1-phosphate guanylyltransferase (GTP) activity"/>
    <property type="evidence" value="ECO:0007669"/>
    <property type="project" value="UniProtKB-EC"/>
</dbReference>
<dbReference type="GO" id="GO:0009298">
    <property type="term" value="P:GDP-mannose biosynthetic process"/>
    <property type="evidence" value="ECO:0007669"/>
    <property type="project" value="UniProtKB-UniPathway"/>
</dbReference>
<dbReference type="GO" id="GO:0009103">
    <property type="term" value="P:lipopolysaccharide biosynthetic process"/>
    <property type="evidence" value="ECO:0007669"/>
    <property type="project" value="UniProtKB-KW"/>
</dbReference>
<dbReference type="CDD" id="cd02213">
    <property type="entry name" value="cupin_PMI_typeII_C"/>
    <property type="match status" value="1"/>
</dbReference>
<dbReference type="CDD" id="cd02509">
    <property type="entry name" value="GDP-M1P_Guanylyltransferase"/>
    <property type="match status" value="1"/>
</dbReference>
<dbReference type="FunFam" id="3.90.550.10:FF:000046">
    <property type="entry name" value="Mannose-1-phosphate guanylyltransferase (GDP)"/>
    <property type="match status" value="1"/>
</dbReference>
<dbReference type="FunFam" id="2.60.120.10:FF:000032">
    <property type="entry name" value="Mannose-1-phosphate guanylyltransferase/mannose-6-phosphate isomerase"/>
    <property type="match status" value="1"/>
</dbReference>
<dbReference type="Gene3D" id="2.60.120.10">
    <property type="entry name" value="Jelly Rolls"/>
    <property type="match status" value="1"/>
</dbReference>
<dbReference type="Gene3D" id="3.90.550.10">
    <property type="entry name" value="Spore Coat Polysaccharide Biosynthesis Protein SpsA, Chain A"/>
    <property type="match status" value="1"/>
</dbReference>
<dbReference type="InterPro" id="IPR018247">
    <property type="entry name" value="EF_Hand_1_Ca_BS"/>
</dbReference>
<dbReference type="InterPro" id="IPR049577">
    <property type="entry name" value="GMPP_N"/>
</dbReference>
<dbReference type="InterPro" id="IPR006375">
    <property type="entry name" value="Man1P_GuaTrfase/Man6P_Isoase"/>
</dbReference>
<dbReference type="InterPro" id="IPR001538">
    <property type="entry name" value="Man6P_isomerase-2_C"/>
</dbReference>
<dbReference type="InterPro" id="IPR054566">
    <property type="entry name" value="ManC/GMP-like_b-helix"/>
</dbReference>
<dbReference type="InterPro" id="IPR051161">
    <property type="entry name" value="Mannose-6P_isomerase_type2"/>
</dbReference>
<dbReference type="InterPro" id="IPR005835">
    <property type="entry name" value="NTP_transferase_dom"/>
</dbReference>
<dbReference type="InterPro" id="IPR029044">
    <property type="entry name" value="Nucleotide-diphossugar_trans"/>
</dbReference>
<dbReference type="InterPro" id="IPR014710">
    <property type="entry name" value="RmlC-like_jellyroll"/>
</dbReference>
<dbReference type="InterPro" id="IPR011051">
    <property type="entry name" value="RmlC_Cupin_sf"/>
</dbReference>
<dbReference type="NCBIfam" id="TIGR01479">
    <property type="entry name" value="GMP_PMI"/>
    <property type="match status" value="1"/>
</dbReference>
<dbReference type="PANTHER" id="PTHR46390">
    <property type="entry name" value="MANNOSE-1-PHOSPHATE GUANYLYLTRANSFERASE"/>
    <property type="match status" value="1"/>
</dbReference>
<dbReference type="PANTHER" id="PTHR46390:SF1">
    <property type="entry name" value="MANNOSE-1-PHOSPHATE GUANYLYLTRANSFERASE"/>
    <property type="match status" value="1"/>
</dbReference>
<dbReference type="Pfam" id="PF22640">
    <property type="entry name" value="ManC_GMP_beta-helix"/>
    <property type="match status" value="1"/>
</dbReference>
<dbReference type="Pfam" id="PF01050">
    <property type="entry name" value="MannoseP_isomer"/>
    <property type="match status" value="1"/>
</dbReference>
<dbReference type="Pfam" id="PF00483">
    <property type="entry name" value="NTP_transferase"/>
    <property type="match status" value="1"/>
</dbReference>
<dbReference type="SUPFAM" id="SSF53448">
    <property type="entry name" value="Nucleotide-diphospho-sugar transferases"/>
    <property type="match status" value="1"/>
</dbReference>
<dbReference type="SUPFAM" id="SSF51182">
    <property type="entry name" value="RmlC-like cupins"/>
    <property type="match status" value="1"/>
</dbReference>